<comment type="function">
    <text evidence="1">Catalyzes the methylthiolation of an aspartic acid residue of ribosomal protein uS12.</text>
</comment>
<comment type="catalytic activity">
    <reaction evidence="1">
        <text>L-aspartate(89)-[ribosomal protein uS12]-hydrogen + (sulfur carrier)-SH + AH2 + 2 S-adenosyl-L-methionine = 3-methylsulfanyl-L-aspartate(89)-[ribosomal protein uS12]-hydrogen + (sulfur carrier)-H + 5'-deoxyadenosine + L-methionine + A + S-adenosyl-L-homocysteine + 2 H(+)</text>
        <dbReference type="Rhea" id="RHEA:37087"/>
        <dbReference type="Rhea" id="RHEA-COMP:10460"/>
        <dbReference type="Rhea" id="RHEA-COMP:10461"/>
        <dbReference type="Rhea" id="RHEA-COMP:14737"/>
        <dbReference type="Rhea" id="RHEA-COMP:14739"/>
        <dbReference type="ChEBI" id="CHEBI:13193"/>
        <dbReference type="ChEBI" id="CHEBI:15378"/>
        <dbReference type="ChEBI" id="CHEBI:17319"/>
        <dbReference type="ChEBI" id="CHEBI:17499"/>
        <dbReference type="ChEBI" id="CHEBI:29917"/>
        <dbReference type="ChEBI" id="CHEBI:29961"/>
        <dbReference type="ChEBI" id="CHEBI:57844"/>
        <dbReference type="ChEBI" id="CHEBI:57856"/>
        <dbReference type="ChEBI" id="CHEBI:59789"/>
        <dbReference type="ChEBI" id="CHEBI:64428"/>
        <dbReference type="ChEBI" id="CHEBI:73599"/>
        <dbReference type="EC" id="2.8.4.4"/>
    </reaction>
</comment>
<comment type="cofactor">
    <cofactor evidence="1">
        <name>[4Fe-4S] cluster</name>
        <dbReference type="ChEBI" id="CHEBI:49883"/>
    </cofactor>
    <text evidence="1">Binds 2 [4Fe-4S] clusters. One cluster is coordinated with 3 cysteines and an exchangeable S-adenosyl-L-methionine.</text>
</comment>
<comment type="subcellular location">
    <subcellularLocation>
        <location evidence="1">Cytoplasm</location>
    </subcellularLocation>
</comment>
<comment type="similarity">
    <text evidence="1">Belongs to the methylthiotransferase family. RimO subfamily.</text>
</comment>
<proteinExistence type="inferred from homology"/>
<accession>Q2RJK1</accession>
<evidence type="ECO:0000255" key="1">
    <source>
        <dbReference type="HAMAP-Rule" id="MF_01865"/>
    </source>
</evidence>
<evidence type="ECO:0000255" key="2">
    <source>
        <dbReference type="PROSITE-ProRule" id="PRU01266"/>
    </source>
</evidence>
<reference key="1">
    <citation type="journal article" date="2008" name="Environ. Microbiol.">
        <title>The complete genome sequence of Moorella thermoacetica (f. Clostridium thermoaceticum).</title>
        <authorList>
            <person name="Pierce E."/>
            <person name="Xie G."/>
            <person name="Barabote R.D."/>
            <person name="Saunders E."/>
            <person name="Han C.S."/>
            <person name="Detter J.C."/>
            <person name="Richardson P."/>
            <person name="Brettin T.S."/>
            <person name="Das A."/>
            <person name="Ljungdahl L.G."/>
            <person name="Ragsdale S.W."/>
        </authorList>
    </citation>
    <scope>NUCLEOTIDE SEQUENCE [LARGE SCALE GENOMIC DNA]</scope>
    <source>
        <strain>ATCC 39073 / JCM 9320</strain>
    </source>
</reference>
<sequence>MIRVAVITLGCPKNQVESEYMLGILEKNHLEVVSDPRQAEVVIINTCSFITAAREEALDTILELARAANHPRLIVAGCLAQQYASELWQELPEAAAFIGPGATGRLPEIINRVLKGERVLDVPGPEMITGELPRLIEDGKPFAYLKIAEGCNNRCTYCTIPSIKGPYRSRPLEKVVAEAVSLAARGIKELVLVAQDTTAYGLDCYGEYRLPELLRRLARIEGIEWVRLLYAYPTRITPELIEVMATEPGVVPYLDLPLQHASEGVLRRMGRPGTGAAGLRAIESLRRAIPEITIRSTFIVGFPGEEEEDFQILLDFLTDARLDWVGAFKFSPEEGTIAASLPGQVPEEVKEERYQRLMLHQQSITRACNEGWLGREVQVLKEGPEVGRSMRQAPEVDGVVYVKGDPSPAGSMVTVKLTQLYNIYDFLGEIKL</sequence>
<name>RIMO_MOOTA</name>
<protein>
    <recommendedName>
        <fullName evidence="1">Ribosomal protein uS12 methylthiotransferase RimO</fullName>
        <shortName evidence="1">uS12 MTTase</shortName>
        <shortName evidence="1">uS12 methylthiotransferase</shortName>
        <ecNumber evidence="1">2.8.4.4</ecNumber>
    </recommendedName>
    <alternativeName>
        <fullName evidence="1">Ribosomal protein uS12 (aspartate-C(3))-methylthiotransferase</fullName>
    </alternativeName>
    <alternativeName>
        <fullName evidence="1">Ribosome maturation factor RimO</fullName>
    </alternativeName>
</protein>
<keyword id="KW-0004">4Fe-4S</keyword>
<keyword id="KW-0963">Cytoplasm</keyword>
<keyword id="KW-0408">Iron</keyword>
<keyword id="KW-0411">Iron-sulfur</keyword>
<keyword id="KW-0479">Metal-binding</keyword>
<keyword id="KW-0949">S-adenosyl-L-methionine</keyword>
<keyword id="KW-0808">Transferase</keyword>
<dbReference type="EC" id="2.8.4.4" evidence="1"/>
<dbReference type="EMBL" id="CP000232">
    <property type="protein sequence ID" value="ABC19388.1"/>
    <property type="molecule type" value="Genomic_DNA"/>
</dbReference>
<dbReference type="RefSeq" id="YP_429931.1">
    <property type="nucleotide sequence ID" value="NC_007644.1"/>
</dbReference>
<dbReference type="SMR" id="Q2RJK1"/>
<dbReference type="STRING" id="264732.Moth_1074"/>
<dbReference type="EnsemblBacteria" id="ABC19388">
    <property type="protein sequence ID" value="ABC19388"/>
    <property type="gene ID" value="Moth_1074"/>
</dbReference>
<dbReference type="KEGG" id="mta:Moth_1074"/>
<dbReference type="PATRIC" id="fig|264732.11.peg.1155"/>
<dbReference type="eggNOG" id="COG0621">
    <property type="taxonomic scope" value="Bacteria"/>
</dbReference>
<dbReference type="HOGENOM" id="CLU_018697_0_1_9"/>
<dbReference type="OrthoDB" id="9805215at2"/>
<dbReference type="GO" id="GO:0005829">
    <property type="term" value="C:cytosol"/>
    <property type="evidence" value="ECO:0007669"/>
    <property type="project" value="TreeGrafter"/>
</dbReference>
<dbReference type="GO" id="GO:0051539">
    <property type="term" value="F:4 iron, 4 sulfur cluster binding"/>
    <property type="evidence" value="ECO:0007669"/>
    <property type="project" value="UniProtKB-UniRule"/>
</dbReference>
<dbReference type="GO" id="GO:0035599">
    <property type="term" value="F:aspartic acid methylthiotransferase activity"/>
    <property type="evidence" value="ECO:0007669"/>
    <property type="project" value="TreeGrafter"/>
</dbReference>
<dbReference type="GO" id="GO:0046872">
    <property type="term" value="F:metal ion binding"/>
    <property type="evidence" value="ECO:0007669"/>
    <property type="project" value="UniProtKB-KW"/>
</dbReference>
<dbReference type="GO" id="GO:0103039">
    <property type="term" value="F:protein methylthiotransferase activity"/>
    <property type="evidence" value="ECO:0007669"/>
    <property type="project" value="UniProtKB-EC"/>
</dbReference>
<dbReference type="GO" id="GO:0006400">
    <property type="term" value="P:tRNA modification"/>
    <property type="evidence" value="ECO:0007669"/>
    <property type="project" value="InterPro"/>
</dbReference>
<dbReference type="CDD" id="cd01335">
    <property type="entry name" value="Radical_SAM"/>
    <property type="match status" value="1"/>
</dbReference>
<dbReference type="FunFam" id="3.80.30.20:FF:000001">
    <property type="entry name" value="tRNA-2-methylthio-N(6)-dimethylallyladenosine synthase 2"/>
    <property type="match status" value="1"/>
</dbReference>
<dbReference type="Gene3D" id="3.40.50.12160">
    <property type="entry name" value="Methylthiotransferase, N-terminal domain"/>
    <property type="match status" value="1"/>
</dbReference>
<dbReference type="Gene3D" id="2.40.50.140">
    <property type="entry name" value="Nucleic acid-binding proteins"/>
    <property type="match status" value="1"/>
</dbReference>
<dbReference type="Gene3D" id="3.80.30.20">
    <property type="entry name" value="tm_1862 like domain"/>
    <property type="match status" value="1"/>
</dbReference>
<dbReference type="HAMAP" id="MF_01865">
    <property type="entry name" value="MTTase_RimO"/>
    <property type="match status" value="1"/>
</dbReference>
<dbReference type="InterPro" id="IPR006638">
    <property type="entry name" value="Elp3/MiaA/NifB-like_rSAM"/>
</dbReference>
<dbReference type="InterPro" id="IPR005839">
    <property type="entry name" value="Methylthiotransferase"/>
</dbReference>
<dbReference type="InterPro" id="IPR020612">
    <property type="entry name" value="Methylthiotransferase_CS"/>
</dbReference>
<dbReference type="InterPro" id="IPR013848">
    <property type="entry name" value="Methylthiotransferase_N"/>
</dbReference>
<dbReference type="InterPro" id="IPR038135">
    <property type="entry name" value="Methylthiotransferase_N_sf"/>
</dbReference>
<dbReference type="InterPro" id="IPR012340">
    <property type="entry name" value="NA-bd_OB-fold"/>
</dbReference>
<dbReference type="InterPro" id="IPR005840">
    <property type="entry name" value="Ribosomal_uS12_MeSTrfase_RimO"/>
</dbReference>
<dbReference type="InterPro" id="IPR007197">
    <property type="entry name" value="rSAM"/>
</dbReference>
<dbReference type="InterPro" id="IPR023404">
    <property type="entry name" value="rSAM_horseshoe"/>
</dbReference>
<dbReference type="InterPro" id="IPR002792">
    <property type="entry name" value="TRAM_dom"/>
</dbReference>
<dbReference type="NCBIfam" id="TIGR01125">
    <property type="entry name" value="30S ribosomal protein S12 methylthiotransferase RimO"/>
    <property type="match status" value="1"/>
</dbReference>
<dbReference type="NCBIfam" id="TIGR00089">
    <property type="entry name" value="MiaB/RimO family radical SAM methylthiotransferase"/>
    <property type="match status" value="1"/>
</dbReference>
<dbReference type="PANTHER" id="PTHR43837">
    <property type="entry name" value="RIBOSOMAL PROTEIN S12 METHYLTHIOTRANSFERASE RIMO"/>
    <property type="match status" value="1"/>
</dbReference>
<dbReference type="PANTHER" id="PTHR43837:SF1">
    <property type="entry name" value="RIBOSOMAL PROTEIN US12 METHYLTHIOTRANSFERASE RIMO"/>
    <property type="match status" value="1"/>
</dbReference>
<dbReference type="Pfam" id="PF04055">
    <property type="entry name" value="Radical_SAM"/>
    <property type="match status" value="1"/>
</dbReference>
<dbReference type="Pfam" id="PF18693">
    <property type="entry name" value="TRAM_2"/>
    <property type="match status" value="1"/>
</dbReference>
<dbReference type="Pfam" id="PF00919">
    <property type="entry name" value="UPF0004"/>
    <property type="match status" value="1"/>
</dbReference>
<dbReference type="SFLD" id="SFLDG01082">
    <property type="entry name" value="B12-binding_domain_containing"/>
    <property type="match status" value="1"/>
</dbReference>
<dbReference type="SFLD" id="SFLDS00029">
    <property type="entry name" value="Radical_SAM"/>
    <property type="match status" value="1"/>
</dbReference>
<dbReference type="SFLD" id="SFLDF00274">
    <property type="entry name" value="ribosomal_protein_S12_methylth"/>
    <property type="match status" value="1"/>
</dbReference>
<dbReference type="SMART" id="SM00729">
    <property type="entry name" value="Elp3"/>
    <property type="match status" value="1"/>
</dbReference>
<dbReference type="SUPFAM" id="SSF102114">
    <property type="entry name" value="Radical SAM enzymes"/>
    <property type="match status" value="1"/>
</dbReference>
<dbReference type="PROSITE" id="PS51449">
    <property type="entry name" value="MTTASE_N"/>
    <property type="match status" value="1"/>
</dbReference>
<dbReference type="PROSITE" id="PS01278">
    <property type="entry name" value="MTTASE_RADICAL"/>
    <property type="match status" value="1"/>
</dbReference>
<dbReference type="PROSITE" id="PS51918">
    <property type="entry name" value="RADICAL_SAM"/>
    <property type="match status" value="1"/>
</dbReference>
<gene>
    <name evidence="1" type="primary">rimO</name>
    <name type="ordered locus">Moth_1074</name>
</gene>
<feature type="chain" id="PRO_0000374898" description="Ribosomal protein uS12 methylthiotransferase RimO">
    <location>
        <begin position="1"/>
        <end position="432"/>
    </location>
</feature>
<feature type="domain" description="MTTase N-terminal" evidence="1">
    <location>
        <begin position="2"/>
        <end position="115"/>
    </location>
</feature>
<feature type="domain" description="Radical SAM core" evidence="2">
    <location>
        <begin position="137"/>
        <end position="367"/>
    </location>
</feature>
<feature type="binding site" evidence="1">
    <location>
        <position position="11"/>
    </location>
    <ligand>
        <name>[4Fe-4S] cluster</name>
        <dbReference type="ChEBI" id="CHEBI:49883"/>
        <label>1</label>
    </ligand>
</feature>
<feature type="binding site" evidence="1">
    <location>
        <position position="47"/>
    </location>
    <ligand>
        <name>[4Fe-4S] cluster</name>
        <dbReference type="ChEBI" id="CHEBI:49883"/>
        <label>1</label>
    </ligand>
</feature>
<feature type="binding site" evidence="1">
    <location>
        <position position="78"/>
    </location>
    <ligand>
        <name>[4Fe-4S] cluster</name>
        <dbReference type="ChEBI" id="CHEBI:49883"/>
        <label>1</label>
    </ligand>
</feature>
<feature type="binding site" evidence="1">
    <location>
        <position position="151"/>
    </location>
    <ligand>
        <name>[4Fe-4S] cluster</name>
        <dbReference type="ChEBI" id="CHEBI:49883"/>
        <label>2</label>
        <note>4Fe-4S-S-AdoMet</note>
    </ligand>
</feature>
<feature type="binding site" evidence="1">
    <location>
        <position position="155"/>
    </location>
    <ligand>
        <name>[4Fe-4S] cluster</name>
        <dbReference type="ChEBI" id="CHEBI:49883"/>
        <label>2</label>
        <note>4Fe-4S-S-AdoMet</note>
    </ligand>
</feature>
<feature type="binding site" evidence="1">
    <location>
        <position position="158"/>
    </location>
    <ligand>
        <name>[4Fe-4S] cluster</name>
        <dbReference type="ChEBI" id="CHEBI:49883"/>
        <label>2</label>
        <note>4Fe-4S-S-AdoMet</note>
    </ligand>
</feature>
<organism>
    <name type="scientific">Moorella thermoacetica (strain ATCC 39073 / JCM 9320)</name>
    <dbReference type="NCBI Taxonomy" id="264732"/>
    <lineage>
        <taxon>Bacteria</taxon>
        <taxon>Bacillati</taxon>
        <taxon>Bacillota</taxon>
        <taxon>Clostridia</taxon>
        <taxon>Moorellales</taxon>
        <taxon>Moorellaceae</taxon>
        <taxon>Moorella</taxon>
    </lineage>
</organism>